<accession>A4VQZ7</accession>
<dbReference type="EC" id="2.3.1.181" evidence="1"/>
<dbReference type="EMBL" id="CP000304">
    <property type="protein sequence ID" value="ABP81398.1"/>
    <property type="molecule type" value="Genomic_DNA"/>
</dbReference>
<dbReference type="SMR" id="A4VQZ7"/>
<dbReference type="KEGG" id="psa:PST_3775"/>
<dbReference type="eggNOG" id="COG0321">
    <property type="taxonomic scope" value="Bacteria"/>
</dbReference>
<dbReference type="HOGENOM" id="CLU_035168_3_1_6"/>
<dbReference type="UniPathway" id="UPA00538">
    <property type="reaction ID" value="UER00592"/>
</dbReference>
<dbReference type="Proteomes" id="UP000000233">
    <property type="component" value="Chromosome"/>
</dbReference>
<dbReference type="GO" id="GO:0005737">
    <property type="term" value="C:cytoplasm"/>
    <property type="evidence" value="ECO:0007669"/>
    <property type="project" value="UniProtKB-SubCell"/>
</dbReference>
<dbReference type="GO" id="GO:0033819">
    <property type="term" value="F:lipoyl(octanoyl) transferase activity"/>
    <property type="evidence" value="ECO:0007669"/>
    <property type="project" value="UniProtKB-EC"/>
</dbReference>
<dbReference type="GO" id="GO:0036211">
    <property type="term" value="P:protein modification process"/>
    <property type="evidence" value="ECO:0007669"/>
    <property type="project" value="InterPro"/>
</dbReference>
<dbReference type="CDD" id="cd16444">
    <property type="entry name" value="LipB"/>
    <property type="match status" value="1"/>
</dbReference>
<dbReference type="FunFam" id="3.30.930.10:FF:000020">
    <property type="entry name" value="Octanoyltransferase"/>
    <property type="match status" value="1"/>
</dbReference>
<dbReference type="Gene3D" id="3.30.930.10">
    <property type="entry name" value="Bira Bifunctional Protein, Domain 2"/>
    <property type="match status" value="1"/>
</dbReference>
<dbReference type="HAMAP" id="MF_00013">
    <property type="entry name" value="LipB"/>
    <property type="match status" value="1"/>
</dbReference>
<dbReference type="InterPro" id="IPR045864">
    <property type="entry name" value="aa-tRNA-synth_II/BPL/LPL"/>
</dbReference>
<dbReference type="InterPro" id="IPR004143">
    <property type="entry name" value="BPL_LPL_catalytic"/>
</dbReference>
<dbReference type="InterPro" id="IPR000544">
    <property type="entry name" value="Octanoyltransferase"/>
</dbReference>
<dbReference type="InterPro" id="IPR020605">
    <property type="entry name" value="Octanoyltransferase_CS"/>
</dbReference>
<dbReference type="NCBIfam" id="TIGR00214">
    <property type="entry name" value="lipB"/>
    <property type="match status" value="1"/>
</dbReference>
<dbReference type="NCBIfam" id="NF010922">
    <property type="entry name" value="PRK14342.1"/>
    <property type="match status" value="1"/>
</dbReference>
<dbReference type="PANTHER" id="PTHR10993:SF7">
    <property type="entry name" value="LIPOYLTRANSFERASE 2, MITOCHONDRIAL-RELATED"/>
    <property type="match status" value="1"/>
</dbReference>
<dbReference type="PANTHER" id="PTHR10993">
    <property type="entry name" value="OCTANOYLTRANSFERASE"/>
    <property type="match status" value="1"/>
</dbReference>
<dbReference type="Pfam" id="PF21948">
    <property type="entry name" value="LplA-B_cat"/>
    <property type="match status" value="1"/>
</dbReference>
<dbReference type="PIRSF" id="PIRSF016262">
    <property type="entry name" value="LPLase"/>
    <property type="match status" value="1"/>
</dbReference>
<dbReference type="SUPFAM" id="SSF55681">
    <property type="entry name" value="Class II aaRS and biotin synthetases"/>
    <property type="match status" value="1"/>
</dbReference>
<dbReference type="PROSITE" id="PS51733">
    <property type="entry name" value="BPL_LPL_CATALYTIC"/>
    <property type="match status" value="1"/>
</dbReference>
<dbReference type="PROSITE" id="PS01313">
    <property type="entry name" value="LIPB"/>
    <property type="match status" value="1"/>
</dbReference>
<gene>
    <name evidence="1" type="primary">lipB</name>
    <name type="ordered locus">PST_3775</name>
</gene>
<evidence type="ECO:0000255" key="1">
    <source>
        <dbReference type="HAMAP-Rule" id="MF_00013"/>
    </source>
</evidence>
<evidence type="ECO:0000255" key="2">
    <source>
        <dbReference type="PROSITE-ProRule" id="PRU01067"/>
    </source>
</evidence>
<name>LIPB_STUS1</name>
<keyword id="KW-0012">Acyltransferase</keyword>
<keyword id="KW-0963">Cytoplasm</keyword>
<keyword id="KW-1185">Reference proteome</keyword>
<keyword id="KW-0808">Transferase</keyword>
<sequence>MMTHDVGVRELGLIEYRAAWQAMQHFTNTRDADSGDEIWLLQHPPVFTQGQAGKAEHLLFPGEIPVVQVDRGGQVTYHGPGQLVGYLLLDVRRLGIGVRELVSRIERSLIDLLAGYDVEAVAKPDAPGVYVGGAKIASLGLRIRNGRSFHGLALNVDMDLEPFRRINPCGYAGLPMTQLRDLIGPIDISEVADRLRDHLVRQLGYAQQKTLAGGIEAYE</sequence>
<proteinExistence type="inferred from homology"/>
<reference key="1">
    <citation type="journal article" date="2008" name="Proc. Natl. Acad. Sci. U.S.A.">
        <title>Nitrogen fixation island and rhizosphere competence traits in the genome of root-associated Pseudomonas stutzeri A1501.</title>
        <authorList>
            <person name="Yan Y."/>
            <person name="Yang J."/>
            <person name="Dou Y."/>
            <person name="Chen M."/>
            <person name="Ping S."/>
            <person name="Peng J."/>
            <person name="Lu W."/>
            <person name="Zhang W."/>
            <person name="Yao Z."/>
            <person name="Li H."/>
            <person name="Liu W."/>
            <person name="He S."/>
            <person name="Geng L."/>
            <person name="Zhang X."/>
            <person name="Yang F."/>
            <person name="Yu H."/>
            <person name="Zhan Y."/>
            <person name="Li D."/>
            <person name="Lin Z."/>
            <person name="Wang Y."/>
            <person name="Elmerich C."/>
            <person name="Lin M."/>
            <person name="Jin Q."/>
        </authorList>
    </citation>
    <scope>NUCLEOTIDE SEQUENCE [LARGE SCALE GENOMIC DNA]</scope>
    <source>
        <strain>A1501</strain>
    </source>
</reference>
<feature type="chain" id="PRO_0000321661" description="Octanoyltransferase">
    <location>
        <begin position="1"/>
        <end position="219"/>
    </location>
</feature>
<feature type="domain" description="BPL/LPL catalytic" evidence="2">
    <location>
        <begin position="32"/>
        <end position="207"/>
    </location>
</feature>
<feature type="active site" description="Acyl-thioester intermediate" evidence="1">
    <location>
        <position position="169"/>
    </location>
</feature>
<feature type="binding site" evidence="1">
    <location>
        <begin position="71"/>
        <end position="78"/>
    </location>
    <ligand>
        <name>substrate</name>
    </ligand>
</feature>
<feature type="binding site" evidence="1">
    <location>
        <begin position="138"/>
        <end position="140"/>
    </location>
    <ligand>
        <name>substrate</name>
    </ligand>
</feature>
<feature type="binding site" evidence="1">
    <location>
        <begin position="151"/>
        <end position="153"/>
    </location>
    <ligand>
        <name>substrate</name>
    </ligand>
</feature>
<feature type="site" description="Lowers pKa of active site Cys" evidence="1">
    <location>
        <position position="135"/>
    </location>
</feature>
<protein>
    <recommendedName>
        <fullName evidence="1">Octanoyltransferase</fullName>
        <ecNumber evidence="1">2.3.1.181</ecNumber>
    </recommendedName>
    <alternativeName>
        <fullName evidence="1">Lipoate-protein ligase B</fullName>
    </alternativeName>
    <alternativeName>
        <fullName evidence="1">Lipoyl/octanoyl transferase</fullName>
    </alternativeName>
    <alternativeName>
        <fullName evidence="1">Octanoyl-[acyl-carrier-protein]-protein N-octanoyltransferase</fullName>
    </alternativeName>
</protein>
<comment type="function">
    <text evidence="1">Catalyzes the transfer of endogenously produced octanoic acid from octanoyl-acyl-carrier-protein onto the lipoyl domains of lipoate-dependent enzymes. Lipoyl-ACP can also act as a substrate although octanoyl-ACP is likely to be the physiological substrate.</text>
</comment>
<comment type="catalytic activity">
    <reaction evidence="1">
        <text>octanoyl-[ACP] + L-lysyl-[protein] = N(6)-octanoyl-L-lysyl-[protein] + holo-[ACP] + H(+)</text>
        <dbReference type="Rhea" id="RHEA:17665"/>
        <dbReference type="Rhea" id="RHEA-COMP:9636"/>
        <dbReference type="Rhea" id="RHEA-COMP:9685"/>
        <dbReference type="Rhea" id="RHEA-COMP:9752"/>
        <dbReference type="Rhea" id="RHEA-COMP:9928"/>
        <dbReference type="ChEBI" id="CHEBI:15378"/>
        <dbReference type="ChEBI" id="CHEBI:29969"/>
        <dbReference type="ChEBI" id="CHEBI:64479"/>
        <dbReference type="ChEBI" id="CHEBI:78463"/>
        <dbReference type="ChEBI" id="CHEBI:78809"/>
        <dbReference type="EC" id="2.3.1.181"/>
    </reaction>
</comment>
<comment type="pathway">
    <text evidence="1">Protein modification; protein lipoylation via endogenous pathway; protein N(6)-(lipoyl)lysine from octanoyl-[acyl-carrier-protein]: step 1/2.</text>
</comment>
<comment type="subcellular location">
    <subcellularLocation>
        <location evidence="1">Cytoplasm</location>
    </subcellularLocation>
</comment>
<comment type="miscellaneous">
    <text evidence="1">In the reaction, the free carboxyl group of octanoic acid is attached via an amide linkage to the epsilon-amino group of a specific lysine residue of lipoyl domains of lipoate-dependent enzymes.</text>
</comment>
<comment type="similarity">
    <text evidence="1">Belongs to the LipB family.</text>
</comment>
<organism>
    <name type="scientific">Stutzerimonas stutzeri (strain A1501)</name>
    <name type="common">Pseudomonas stutzeri</name>
    <dbReference type="NCBI Taxonomy" id="379731"/>
    <lineage>
        <taxon>Bacteria</taxon>
        <taxon>Pseudomonadati</taxon>
        <taxon>Pseudomonadota</taxon>
        <taxon>Gammaproteobacteria</taxon>
        <taxon>Pseudomonadales</taxon>
        <taxon>Pseudomonadaceae</taxon>
        <taxon>Stutzerimonas</taxon>
    </lineage>
</organism>